<comment type="function">
    <text evidence="1">Large subunit of the glutamine-dependent carbamoyl phosphate synthetase (CPSase). CPSase catalyzes the formation of carbamoyl phosphate from the ammonia moiety of glutamine, carbonate, and phosphate donated by ATP, constituting the first step of 2 biosynthetic pathways, one leading to arginine and/or urea and the other to pyrimidine nucleotides. The large subunit (synthetase) binds the substrates ammonia (free or transferred from glutamine from the small subunit), hydrogencarbonate and ATP and carries out an ATP-coupled ligase reaction, activating hydrogencarbonate by forming carboxy phosphate which reacts with ammonia to form carbamoyl phosphate.</text>
</comment>
<comment type="catalytic activity">
    <reaction evidence="1">
        <text>hydrogencarbonate + L-glutamine + 2 ATP + H2O = carbamoyl phosphate + L-glutamate + 2 ADP + phosphate + 2 H(+)</text>
        <dbReference type="Rhea" id="RHEA:18633"/>
        <dbReference type="ChEBI" id="CHEBI:15377"/>
        <dbReference type="ChEBI" id="CHEBI:15378"/>
        <dbReference type="ChEBI" id="CHEBI:17544"/>
        <dbReference type="ChEBI" id="CHEBI:29985"/>
        <dbReference type="ChEBI" id="CHEBI:30616"/>
        <dbReference type="ChEBI" id="CHEBI:43474"/>
        <dbReference type="ChEBI" id="CHEBI:58228"/>
        <dbReference type="ChEBI" id="CHEBI:58359"/>
        <dbReference type="ChEBI" id="CHEBI:456216"/>
        <dbReference type="EC" id="6.3.5.5"/>
    </reaction>
</comment>
<comment type="catalytic activity">
    <molecule>Carbamoyl phosphate synthase large chain</molecule>
    <reaction evidence="1">
        <text>hydrogencarbonate + NH4(+) + 2 ATP = carbamoyl phosphate + 2 ADP + phosphate + 2 H(+)</text>
        <dbReference type="Rhea" id="RHEA:18029"/>
        <dbReference type="ChEBI" id="CHEBI:15378"/>
        <dbReference type="ChEBI" id="CHEBI:17544"/>
        <dbReference type="ChEBI" id="CHEBI:28938"/>
        <dbReference type="ChEBI" id="CHEBI:30616"/>
        <dbReference type="ChEBI" id="CHEBI:43474"/>
        <dbReference type="ChEBI" id="CHEBI:58228"/>
        <dbReference type="ChEBI" id="CHEBI:456216"/>
        <dbReference type="EC" id="6.3.4.16"/>
    </reaction>
</comment>
<comment type="cofactor">
    <cofactor evidence="1">
        <name>Mg(2+)</name>
        <dbReference type="ChEBI" id="CHEBI:18420"/>
    </cofactor>
    <cofactor evidence="1">
        <name>Mn(2+)</name>
        <dbReference type="ChEBI" id="CHEBI:29035"/>
    </cofactor>
    <text evidence="1">Binds 4 Mg(2+) or Mn(2+) ions per subunit.</text>
</comment>
<comment type="pathway">
    <text evidence="1">Amino-acid biosynthesis; L-arginine biosynthesis; carbamoyl phosphate from bicarbonate: step 1/1.</text>
</comment>
<comment type="pathway">
    <text evidence="1">Pyrimidine metabolism; UMP biosynthesis via de novo pathway; (S)-dihydroorotate from bicarbonate: step 1/3.</text>
</comment>
<comment type="subunit">
    <text evidence="1">Composed of two chains; the small (or glutamine) chain promotes the hydrolysis of glutamine to ammonia, which is used by the large (or ammonia) chain to synthesize carbamoyl phosphate. Tetramer of heterodimers (alpha,beta)4.</text>
</comment>
<comment type="domain">
    <text evidence="1">The large subunit is composed of 2 ATP-grasp domains that are involved in binding the 2 ATP molecules needed for carbamoyl phosphate synthesis. The N-terminal ATP-grasp domain (referred to as the carboxyphosphate synthetic component) catalyzes the ATP-dependent phosphorylation of hydrogencarbonate to carboxyphosphate and the subsequent nucleophilic attack by ammonia to form a carbamate intermediate. The C-terminal ATP-grasp domain (referred to as the carbamoyl phosphate synthetic component) then catalyzes the phosphorylation of carbamate with the second ATP to form the end product carbamoyl phosphate. The reactive and unstable enzyme intermediates are sequentially channeled from one active site to the next through the interior of the protein over a distance of at least 96 A.</text>
</comment>
<comment type="similarity">
    <text evidence="1">Belongs to the CarB family.</text>
</comment>
<proteinExistence type="inferred from homology"/>
<keyword id="KW-0028">Amino-acid biosynthesis</keyword>
<keyword id="KW-0055">Arginine biosynthesis</keyword>
<keyword id="KW-0067">ATP-binding</keyword>
<keyword id="KW-0436">Ligase</keyword>
<keyword id="KW-0460">Magnesium</keyword>
<keyword id="KW-0464">Manganese</keyword>
<keyword id="KW-0479">Metal-binding</keyword>
<keyword id="KW-0547">Nucleotide-binding</keyword>
<keyword id="KW-0665">Pyrimidine biosynthesis</keyword>
<keyword id="KW-1185">Reference proteome</keyword>
<keyword id="KW-0677">Repeat</keyword>
<evidence type="ECO:0000255" key="1">
    <source>
        <dbReference type="HAMAP-Rule" id="MF_01210"/>
    </source>
</evidence>
<sequence>MPRRSDLHRILVIGSGPIVIGQAAEFDYSGTQAIKALREEGYEVILVNSNPATIMTDPEFADRTYVEPVTPEFVEKVIAKERPDAVLPTMGGQTALNVALALHDSGVLAKYGCELIGANARAIRVAEDRKLFGEAMEKIGLRCPTGRTVTSLEEALSAVEETGFPAIIRPSFTLGGTGGGIAYNREEFETIVRRGLDLSPVHSVLIERSLLGWKEYELEVMRDCADNVVIVCSIENLDPMGVHTGDSITVAPAMTLTDREYQVMRDAAVAIIREIGVDAGGCNIQFAVNPTNGELIVIEMNPRVSRSSALASKATGFPIARIGAKLAVGYTLDEVPNDITKTTPASFEPVLDYVIVKCPRFAFEKFVSSDPGLTTQMKSVGESMAIGRTFKEAFQKALRALETGRSGWTIAERLQDDRLTEGSKEELRGALRRPTPERIFQLKRAMLLGMDTKELYEITAIDPWFLDQLRELIDAEQWYEKLTGVDAVSMRRMKRLGFSDRQLGALRGQSESDARAERWALGVRPSYKMIDTCAGEFPSSTPYLYGNYDEESEAATEGRKKVVILGSGPNRIGQGVEFDYCCVRAVLALREQGYETIMVNSNPETVSTDFDISDKLYFEPLSLEDVLEIVHREQPEGVIVQLGGQTPLKLTRPLEAAGVKILGTSPDAIDAAEDRRRFEAIARELGIEQPANGTATSVDEAVTIAQRIGFPVLVRPSYVLGGRAMEIVHDEVSLRDYFERAARVSEERPVLVDRFLEDAFEADVDALSDGTDVVIGAVMEHIESAGIHSGDSACILPPYLIPAAAVAQMKEHTIAFAKRLGVVGLINVQYAYKDGQVYVIEVNPRASRTAPFVSKAIGVSLPSVAARLMLGETLAEVGFTQEIIPPYISVKEAVFPFNKFREFDPVLGPEMRSTGEVMGIDDDFGAAFMKSQLAADNALPREGTVFFTVSDGDKPTAASLAGKFHSIGFSIMATSGTAAFFREQGIPVTSVLKVHEGRPHGVDKILNGEVQLLVNTPLGKHAQVDDEKLRQAAIANRLPYTTTLTAASAAFEAIAARRTREPVVRSLQEWHEILRAPGAVESATAGSTQPAGVA</sequence>
<dbReference type="EC" id="6.3.4.16" evidence="1"/>
<dbReference type="EC" id="6.3.5.5" evidence="1"/>
<dbReference type="EMBL" id="AP009153">
    <property type="protein sequence ID" value="BAH39010.1"/>
    <property type="molecule type" value="Genomic_DNA"/>
</dbReference>
<dbReference type="RefSeq" id="WP_012683457.1">
    <property type="nucleotide sequence ID" value="NC_012489.1"/>
</dbReference>
<dbReference type="SMR" id="C1A4I5"/>
<dbReference type="STRING" id="379066.GAU_1968"/>
<dbReference type="KEGG" id="gau:GAU_1968"/>
<dbReference type="eggNOG" id="COG0458">
    <property type="taxonomic scope" value="Bacteria"/>
</dbReference>
<dbReference type="HOGENOM" id="CLU_000513_1_0_0"/>
<dbReference type="OrthoDB" id="9804197at2"/>
<dbReference type="UniPathway" id="UPA00068">
    <property type="reaction ID" value="UER00171"/>
</dbReference>
<dbReference type="UniPathway" id="UPA00070">
    <property type="reaction ID" value="UER00115"/>
</dbReference>
<dbReference type="Proteomes" id="UP000002209">
    <property type="component" value="Chromosome"/>
</dbReference>
<dbReference type="GO" id="GO:0005737">
    <property type="term" value="C:cytoplasm"/>
    <property type="evidence" value="ECO:0007669"/>
    <property type="project" value="TreeGrafter"/>
</dbReference>
<dbReference type="GO" id="GO:0005524">
    <property type="term" value="F:ATP binding"/>
    <property type="evidence" value="ECO:0007669"/>
    <property type="project" value="UniProtKB-UniRule"/>
</dbReference>
<dbReference type="GO" id="GO:0004087">
    <property type="term" value="F:carbamoyl-phosphate synthase (ammonia) activity"/>
    <property type="evidence" value="ECO:0007669"/>
    <property type="project" value="RHEA"/>
</dbReference>
<dbReference type="GO" id="GO:0004088">
    <property type="term" value="F:carbamoyl-phosphate synthase (glutamine-hydrolyzing) activity"/>
    <property type="evidence" value="ECO:0007669"/>
    <property type="project" value="UniProtKB-UniRule"/>
</dbReference>
<dbReference type="GO" id="GO:0046872">
    <property type="term" value="F:metal ion binding"/>
    <property type="evidence" value="ECO:0007669"/>
    <property type="project" value="UniProtKB-KW"/>
</dbReference>
<dbReference type="GO" id="GO:0044205">
    <property type="term" value="P:'de novo' UMP biosynthetic process"/>
    <property type="evidence" value="ECO:0007669"/>
    <property type="project" value="UniProtKB-UniRule"/>
</dbReference>
<dbReference type="GO" id="GO:0006541">
    <property type="term" value="P:glutamine metabolic process"/>
    <property type="evidence" value="ECO:0007669"/>
    <property type="project" value="TreeGrafter"/>
</dbReference>
<dbReference type="GO" id="GO:0006526">
    <property type="term" value="P:L-arginine biosynthetic process"/>
    <property type="evidence" value="ECO:0007669"/>
    <property type="project" value="UniProtKB-UniRule"/>
</dbReference>
<dbReference type="CDD" id="cd01424">
    <property type="entry name" value="MGS_CPS_II"/>
    <property type="match status" value="1"/>
</dbReference>
<dbReference type="FunFam" id="1.10.1030.10:FF:000002">
    <property type="entry name" value="Carbamoyl-phosphate synthase large chain"/>
    <property type="match status" value="1"/>
</dbReference>
<dbReference type="FunFam" id="3.30.1490.20:FF:000001">
    <property type="entry name" value="Carbamoyl-phosphate synthase large chain"/>
    <property type="match status" value="1"/>
</dbReference>
<dbReference type="FunFam" id="3.30.470.20:FF:000007">
    <property type="entry name" value="Carbamoyl-phosphate synthase large chain"/>
    <property type="match status" value="1"/>
</dbReference>
<dbReference type="FunFam" id="3.30.470.20:FF:000013">
    <property type="entry name" value="Carbamoyl-phosphate synthase large chain"/>
    <property type="match status" value="1"/>
</dbReference>
<dbReference type="FunFam" id="3.40.50.20:FF:000001">
    <property type="entry name" value="Carbamoyl-phosphate synthase large chain"/>
    <property type="match status" value="1"/>
</dbReference>
<dbReference type="FunFam" id="3.40.50.20:FF:000003">
    <property type="entry name" value="Carbamoyl-phosphate synthase large chain"/>
    <property type="match status" value="1"/>
</dbReference>
<dbReference type="Gene3D" id="3.40.50.20">
    <property type="match status" value="2"/>
</dbReference>
<dbReference type="Gene3D" id="3.30.470.20">
    <property type="entry name" value="ATP-grasp fold, B domain"/>
    <property type="match status" value="2"/>
</dbReference>
<dbReference type="Gene3D" id="1.10.1030.10">
    <property type="entry name" value="Carbamoyl-phosphate synthetase, large subunit oligomerisation domain"/>
    <property type="match status" value="1"/>
</dbReference>
<dbReference type="Gene3D" id="3.40.50.1380">
    <property type="entry name" value="Methylglyoxal synthase-like domain"/>
    <property type="match status" value="1"/>
</dbReference>
<dbReference type="HAMAP" id="MF_01210_A">
    <property type="entry name" value="CPSase_L_chain_A"/>
    <property type="match status" value="1"/>
</dbReference>
<dbReference type="HAMAP" id="MF_01210_B">
    <property type="entry name" value="CPSase_L_chain_B"/>
    <property type="match status" value="1"/>
</dbReference>
<dbReference type="InterPro" id="IPR011761">
    <property type="entry name" value="ATP-grasp"/>
</dbReference>
<dbReference type="InterPro" id="IPR006275">
    <property type="entry name" value="CarbamoylP_synth_lsu"/>
</dbReference>
<dbReference type="InterPro" id="IPR005480">
    <property type="entry name" value="CarbamoylP_synth_lsu_oligo"/>
</dbReference>
<dbReference type="InterPro" id="IPR036897">
    <property type="entry name" value="CarbamoylP_synth_lsu_oligo_sf"/>
</dbReference>
<dbReference type="InterPro" id="IPR005479">
    <property type="entry name" value="CbamoylP_synth_lsu-like_ATP-bd"/>
</dbReference>
<dbReference type="InterPro" id="IPR005483">
    <property type="entry name" value="CbamoylP_synth_lsu_CPSase_dom"/>
</dbReference>
<dbReference type="InterPro" id="IPR011607">
    <property type="entry name" value="MGS-like_dom"/>
</dbReference>
<dbReference type="InterPro" id="IPR036914">
    <property type="entry name" value="MGS-like_dom_sf"/>
</dbReference>
<dbReference type="InterPro" id="IPR033937">
    <property type="entry name" value="MGS_CPS_CarB"/>
</dbReference>
<dbReference type="InterPro" id="IPR016185">
    <property type="entry name" value="PreATP-grasp_dom_sf"/>
</dbReference>
<dbReference type="NCBIfam" id="TIGR01369">
    <property type="entry name" value="CPSaseII_lrg"/>
    <property type="match status" value="1"/>
</dbReference>
<dbReference type="NCBIfam" id="NF003671">
    <property type="entry name" value="PRK05294.1"/>
    <property type="match status" value="1"/>
</dbReference>
<dbReference type="NCBIfam" id="NF009455">
    <property type="entry name" value="PRK12815.1"/>
    <property type="match status" value="1"/>
</dbReference>
<dbReference type="PANTHER" id="PTHR11405:SF53">
    <property type="entry name" value="CARBAMOYL-PHOSPHATE SYNTHASE [AMMONIA], MITOCHONDRIAL"/>
    <property type="match status" value="1"/>
</dbReference>
<dbReference type="PANTHER" id="PTHR11405">
    <property type="entry name" value="CARBAMOYLTRANSFERASE FAMILY MEMBER"/>
    <property type="match status" value="1"/>
</dbReference>
<dbReference type="Pfam" id="PF02786">
    <property type="entry name" value="CPSase_L_D2"/>
    <property type="match status" value="2"/>
</dbReference>
<dbReference type="Pfam" id="PF02787">
    <property type="entry name" value="CPSase_L_D3"/>
    <property type="match status" value="1"/>
</dbReference>
<dbReference type="Pfam" id="PF02142">
    <property type="entry name" value="MGS"/>
    <property type="match status" value="1"/>
</dbReference>
<dbReference type="PRINTS" id="PR00098">
    <property type="entry name" value="CPSASE"/>
</dbReference>
<dbReference type="SMART" id="SM01096">
    <property type="entry name" value="CPSase_L_D3"/>
    <property type="match status" value="1"/>
</dbReference>
<dbReference type="SMART" id="SM00851">
    <property type="entry name" value="MGS"/>
    <property type="match status" value="1"/>
</dbReference>
<dbReference type="SUPFAM" id="SSF48108">
    <property type="entry name" value="Carbamoyl phosphate synthetase, large subunit connection domain"/>
    <property type="match status" value="1"/>
</dbReference>
<dbReference type="SUPFAM" id="SSF56059">
    <property type="entry name" value="Glutathione synthetase ATP-binding domain-like"/>
    <property type="match status" value="2"/>
</dbReference>
<dbReference type="SUPFAM" id="SSF52335">
    <property type="entry name" value="Methylglyoxal synthase-like"/>
    <property type="match status" value="1"/>
</dbReference>
<dbReference type="SUPFAM" id="SSF52440">
    <property type="entry name" value="PreATP-grasp domain"/>
    <property type="match status" value="2"/>
</dbReference>
<dbReference type="PROSITE" id="PS50975">
    <property type="entry name" value="ATP_GRASP"/>
    <property type="match status" value="2"/>
</dbReference>
<dbReference type="PROSITE" id="PS00866">
    <property type="entry name" value="CPSASE_1"/>
    <property type="match status" value="1"/>
</dbReference>
<dbReference type="PROSITE" id="PS00867">
    <property type="entry name" value="CPSASE_2"/>
    <property type="match status" value="2"/>
</dbReference>
<dbReference type="PROSITE" id="PS51855">
    <property type="entry name" value="MGS"/>
    <property type="match status" value="1"/>
</dbReference>
<protein>
    <recommendedName>
        <fullName evidence="1">Carbamoyl phosphate synthase large chain</fullName>
        <ecNumber evidence="1">6.3.4.16</ecNumber>
        <ecNumber evidence="1">6.3.5.5</ecNumber>
    </recommendedName>
    <alternativeName>
        <fullName evidence="1">Carbamoyl phosphate synthetase ammonia chain</fullName>
    </alternativeName>
</protein>
<gene>
    <name evidence="1" type="primary">carB</name>
    <name type="ordered locus">GAU_1968</name>
</gene>
<feature type="chain" id="PRO_1000213876" description="Carbamoyl phosphate synthase large chain">
    <location>
        <begin position="1"/>
        <end position="1094"/>
    </location>
</feature>
<feature type="domain" description="ATP-grasp 1" evidence="1">
    <location>
        <begin position="133"/>
        <end position="328"/>
    </location>
</feature>
<feature type="domain" description="ATP-grasp 2" evidence="1">
    <location>
        <begin position="679"/>
        <end position="870"/>
    </location>
</feature>
<feature type="domain" description="MGS-like" evidence="1">
    <location>
        <begin position="937"/>
        <end position="1077"/>
    </location>
</feature>
<feature type="region of interest" description="Carboxyphosphate synthetic domain" evidence="1">
    <location>
        <begin position="1"/>
        <end position="402"/>
    </location>
</feature>
<feature type="region of interest" description="Oligomerization domain" evidence="1">
    <location>
        <begin position="403"/>
        <end position="552"/>
    </location>
</feature>
<feature type="region of interest" description="Carbamoyl phosphate synthetic domain" evidence="1">
    <location>
        <begin position="553"/>
        <end position="936"/>
    </location>
</feature>
<feature type="region of interest" description="Allosteric domain" evidence="1">
    <location>
        <begin position="937"/>
        <end position="1094"/>
    </location>
</feature>
<feature type="binding site" evidence="1">
    <location>
        <position position="129"/>
    </location>
    <ligand>
        <name>ATP</name>
        <dbReference type="ChEBI" id="CHEBI:30616"/>
        <label>1</label>
    </ligand>
</feature>
<feature type="binding site" evidence="1">
    <location>
        <position position="169"/>
    </location>
    <ligand>
        <name>ATP</name>
        <dbReference type="ChEBI" id="CHEBI:30616"/>
        <label>1</label>
    </ligand>
</feature>
<feature type="binding site" evidence="1">
    <location>
        <position position="175"/>
    </location>
    <ligand>
        <name>ATP</name>
        <dbReference type="ChEBI" id="CHEBI:30616"/>
        <label>1</label>
    </ligand>
</feature>
<feature type="binding site" evidence="1">
    <location>
        <position position="176"/>
    </location>
    <ligand>
        <name>ATP</name>
        <dbReference type="ChEBI" id="CHEBI:30616"/>
        <label>1</label>
    </ligand>
</feature>
<feature type="binding site" evidence="1">
    <location>
        <position position="208"/>
    </location>
    <ligand>
        <name>ATP</name>
        <dbReference type="ChEBI" id="CHEBI:30616"/>
        <label>1</label>
    </ligand>
</feature>
<feature type="binding site" evidence="1">
    <location>
        <position position="210"/>
    </location>
    <ligand>
        <name>ATP</name>
        <dbReference type="ChEBI" id="CHEBI:30616"/>
        <label>1</label>
    </ligand>
</feature>
<feature type="binding site" evidence="1">
    <location>
        <position position="215"/>
    </location>
    <ligand>
        <name>ATP</name>
        <dbReference type="ChEBI" id="CHEBI:30616"/>
        <label>1</label>
    </ligand>
</feature>
<feature type="binding site" evidence="1">
    <location>
        <position position="241"/>
    </location>
    <ligand>
        <name>ATP</name>
        <dbReference type="ChEBI" id="CHEBI:30616"/>
        <label>1</label>
    </ligand>
</feature>
<feature type="binding site" evidence="1">
    <location>
        <position position="242"/>
    </location>
    <ligand>
        <name>ATP</name>
        <dbReference type="ChEBI" id="CHEBI:30616"/>
        <label>1</label>
    </ligand>
</feature>
<feature type="binding site" evidence="1">
    <location>
        <position position="243"/>
    </location>
    <ligand>
        <name>ATP</name>
        <dbReference type="ChEBI" id="CHEBI:30616"/>
        <label>1</label>
    </ligand>
</feature>
<feature type="binding site" evidence="1">
    <location>
        <position position="285"/>
    </location>
    <ligand>
        <name>ATP</name>
        <dbReference type="ChEBI" id="CHEBI:30616"/>
        <label>1</label>
    </ligand>
</feature>
<feature type="binding site" evidence="1">
    <location>
        <position position="285"/>
    </location>
    <ligand>
        <name>Mg(2+)</name>
        <dbReference type="ChEBI" id="CHEBI:18420"/>
        <label>1</label>
    </ligand>
</feature>
<feature type="binding site" evidence="1">
    <location>
        <position position="285"/>
    </location>
    <ligand>
        <name>Mn(2+)</name>
        <dbReference type="ChEBI" id="CHEBI:29035"/>
        <label>1</label>
    </ligand>
</feature>
<feature type="binding site" evidence="1">
    <location>
        <position position="299"/>
    </location>
    <ligand>
        <name>ATP</name>
        <dbReference type="ChEBI" id="CHEBI:30616"/>
        <label>1</label>
    </ligand>
</feature>
<feature type="binding site" evidence="1">
    <location>
        <position position="299"/>
    </location>
    <ligand>
        <name>Mg(2+)</name>
        <dbReference type="ChEBI" id="CHEBI:18420"/>
        <label>1</label>
    </ligand>
</feature>
<feature type="binding site" evidence="1">
    <location>
        <position position="299"/>
    </location>
    <ligand>
        <name>Mg(2+)</name>
        <dbReference type="ChEBI" id="CHEBI:18420"/>
        <label>2</label>
    </ligand>
</feature>
<feature type="binding site" evidence="1">
    <location>
        <position position="299"/>
    </location>
    <ligand>
        <name>Mn(2+)</name>
        <dbReference type="ChEBI" id="CHEBI:29035"/>
        <label>1</label>
    </ligand>
</feature>
<feature type="binding site" evidence="1">
    <location>
        <position position="299"/>
    </location>
    <ligand>
        <name>Mn(2+)</name>
        <dbReference type="ChEBI" id="CHEBI:29035"/>
        <label>2</label>
    </ligand>
</feature>
<feature type="binding site" evidence="1">
    <location>
        <position position="301"/>
    </location>
    <ligand>
        <name>Mg(2+)</name>
        <dbReference type="ChEBI" id="CHEBI:18420"/>
        <label>2</label>
    </ligand>
</feature>
<feature type="binding site" evidence="1">
    <location>
        <position position="301"/>
    </location>
    <ligand>
        <name>Mn(2+)</name>
        <dbReference type="ChEBI" id="CHEBI:29035"/>
        <label>2</label>
    </ligand>
</feature>
<feature type="binding site" evidence="1">
    <location>
        <position position="715"/>
    </location>
    <ligand>
        <name>ATP</name>
        <dbReference type="ChEBI" id="CHEBI:30616"/>
        <label>2</label>
    </ligand>
</feature>
<feature type="binding site" evidence="1">
    <location>
        <position position="754"/>
    </location>
    <ligand>
        <name>ATP</name>
        <dbReference type="ChEBI" id="CHEBI:30616"/>
        <label>2</label>
    </ligand>
</feature>
<feature type="binding site" evidence="1">
    <location>
        <position position="756"/>
    </location>
    <ligand>
        <name>ATP</name>
        <dbReference type="ChEBI" id="CHEBI:30616"/>
        <label>2</label>
    </ligand>
</feature>
<feature type="binding site" evidence="1">
    <location>
        <position position="761"/>
    </location>
    <ligand>
        <name>ATP</name>
        <dbReference type="ChEBI" id="CHEBI:30616"/>
        <label>2</label>
    </ligand>
</feature>
<feature type="binding site" evidence="1">
    <location>
        <position position="786"/>
    </location>
    <ligand>
        <name>ATP</name>
        <dbReference type="ChEBI" id="CHEBI:30616"/>
        <label>2</label>
    </ligand>
</feature>
<feature type="binding site" evidence="1">
    <location>
        <position position="787"/>
    </location>
    <ligand>
        <name>ATP</name>
        <dbReference type="ChEBI" id="CHEBI:30616"/>
        <label>2</label>
    </ligand>
</feature>
<feature type="binding site" evidence="1">
    <location>
        <position position="788"/>
    </location>
    <ligand>
        <name>ATP</name>
        <dbReference type="ChEBI" id="CHEBI:30616"/>
        <label>2</label>
    </ligand>
</feature>
<feature type="binding site" evidence="1">
    <location>
        <position position="789"/>
    </location>
    <ligand>
        <name>ATP</name>
        <dbReference type="ChEBI" id="CHEBI:30616"/>
        <label>2</label>
    </ligand>
</feature>
<feature type="binding site" evidence="1">
    <location>
        <position position="829"/>
    </location>
    <ligand>
        <name>ATP</name>
        <dbReference type="ChEBI" id="CHEBI:30616"/>
        <label>2</label>
    </ligand>
</feature>
<feature type="binding site" evidence="1">
    <location>
        <position position="829"/>
    </location>
    <ligand>
        <name>Mg(2+)</name>
        <dbReference type="ChEBI" id="CHEBI:18420"/>
        <label>3</label>
    </ligand>
</feature>
<feature type="binding site" evidence="1">
    <location>
        <position position="829"/>
    </location>
    <ligand>
        <name>Mn(2+)</name>
        <dbReference type="ChEBI" id="CHEBI:29035"/>
        <label>3</label>
    </ligand>
</feature>
<feature type="binding site" evidence="1">
    <location>
        <position position="841"/>
    </location>
    <ligand>
        <name>ATP</name>
        <dbReference type="ChEBI" id="CHEBI:30616"/>
        <label>2</label>
    </ligand>
</feature>
<feature type="binding site" evidence="1">
    <location>
        <position position="841"/>
    </location>
    <ligand>
        <name>Mg(2+)</name>
        <dbReference type="ChEBI" id="CHEBI:18420"/>
        <label>3</label>
    </ligand>
</feature>
<feature type="binding site" evidence="1">
    <location>
        <position position="841"/>
    </location>
    <ligand>
        <name>Mg(2+)</name>
        <dbReference type="ChEBI" id="CHEBI:18420"/>
        <label>4</label>
    </ligand>
</feature>
<feature type="binding site" evidence="1">
    <location>
        <position position="841"/>
    </location>
    <ligand>
        <name>Mn(2+)</name>
        <dbReference type="ChEBI" id="CHEBI:29035"/>
        <label>3</label>
    </ligand>
</feature>
<feature type="binding site" evidence="1">
    <location>
        <position position="841"/>
    </location>
    <ligand>
        <name>Mn(2+)</name>
        <dbReference type="ChEBI" id="CHEBI:29035"/>
        <label>4</label>
    </ligand>
</feature>
<feature type="binding site" evidence="1">
    <location>
        <position position="843"/>
    </location>
    <ligand>
        <name>Mg(2+)</name>
        <dbReference type="ChEBI" id="CHEBI:18420"/>
        <label>4</label>
    </ligand>
</feature>
<feature type="binding site" evidence="1">
    <location>
        <position position="843"/>
    </location>
    <ligand>
        <name>Mn(2+)</name>
        <dbReference type="ChEBI" id="CHEBI:29035"/>
        <label>4</label>
    </ligand>
</feature>
<accession>C1A4I5</accession>
<organism>
    <name type="scientific">Gemmatimonas aurantiaca (strain DSM 14586 / JCM 11422 / NBRC 100505 / T-27)</name>
    <dbReference type="NCBI Taxonomy" id="379066"/>
    <lineage>
        <taxon>Bacteria</taxon>
        <taxon>Pseudomonadati</taxon>
        <taxon>Gemmatimonadota</taxon>
        <taxon>Gemmatimonadia</taxon>
        <taxon>Gemmatimonadales</taxon>
        <taxon>Gemmatimonadaceae</taxon>
        <taxon>Gemmatimonas</taxon>
    </lineage>
</organism>
<reference key="1">
    <citation type="submission" date="2006-03" db="EMBL/GenBank/DDBJ databases">
        <title>Complete genome sequence of Gemmatimonas aurantiaca T-27 that represents a novel phylum Gemmatimonadetes.</title>
        <authorList>
            <person name="Takasaki K."/>
            <person name="Ichikawa N."/>
            <person name="Miura H."/>
            <person name="Matsushita S."/>
            <person name="Watanabe Y."/>
            <person name="Oguchi A."/>
            <person name="Ankai A."/>
            <person name="Yashiro I."/>
            <person name="Takahashi M."/>
            <person name="Terui Y."/>
            <person name="Fukui S."/>
            <person name="Yokoyama H."/>
            <person name="Tanikawa S."/>
            <person name="Hanada S."/>
            <person name="Kamagata Y."/>
            <person name="Fujita N."/>
        </authorList>
    </citation>
    <scope>NUCLEOTIDE SEQUENCE [LARGE SCALE GENOMIC DNA]</scope>
    <source>
        <strain>DSM 14586 / JCM 11422 / NBRC 100505 / T-27</strain>
    </source>
</reference>
<name>CARB_GEMAT</name>